<sequence>MAKRTDIKKIMVIGSGPIVIGQAAEFDYAGTQACLALKEEGYQVVLVNSNPATIMTDKEVADKVYIEPLTLAFVSRILRKERPDALLPTLGGQTGLNLAMELSKAGILQELGVELLGTPLSAIDQAEDRDLFKQLMKELGEPIPESEIVTTVEGAISFANAIGYPVIVRPAFTLGGTGGGICTNEEALRDIVENGLKLSPVTQCLIERSIAGFKEIEYEVMRDAADNALVVCSMENFDPVGIHTGDSIVFAPTQTLSDVENQLLRDASLRIIRALKIEGGCNVQLALDPNSFSYYVIEVNPRVSRSSALASKATGYPIAKIAAKIAVGLRLDDMLNPVTGTTYAMFEPALDYVVAKLPRFPFDKFEQGERRLGTQMKATGEVMAIGRRIEECLLKACRSLEIGVDHNELKGLDTVSDHELVAHIVRAQDDRLFYLSEALRRGYSIEELAGLTKIDLFFLDKLRHIVELEQELVKKPVDIDLLTEAKRYGFSDQKIAELWQTDAASIRRLRRAYRVLPVYKMVDTCAAEFDSQTPYFYSTYEWENESIKSEKESVIVLGSGPIRIGQGVEFDYATVHSVKAIQAAGYEAIIMNSNPETVSTDFSISDKLYFEPLTFEEVMNVIELEQPKGVILQFGGQTAINLAEQLTKAGVPILGTQLEDLDRAEDRKLFEKALKDLGIPQPPGKTATNEAEALEAARAIGFPVLVRPSYVLGGRAMEIVENEDDLRSYMKTAVKASPEHPVLIDSYILGKECEVDAISDGQSVLIPGIMEHIERAGVHSGDSMAVYPPQHLSKQVQDKIVDYTKRLAIGLNCIGMMNIQFVIQNEQVYVIEVNPRASRTVPFLSKVTNIPMAQVATKLILDQTLKDLGYQDGLYPESSLVHIKAPVFSFAKLAKVDSLLGPEMKSTGEVMGSDLTLEKALYKAFEASYLHMPEYGTIVFTIADDHKPEALALARRFSAIGYQVMATEGTAAFFADQGLDSQLVGKIGGNAHDIPALLRKGQIQAIINTVGAKRVADQDGQVIRSSAIEQGVPLFTALDTAAAMLRVLESRTFSIEAI</sequence>
<name>CARB_STRS7</name>
<accession>C0MEH1</accession>
<dbReference type="EC" id="6.3.4.16" evidence="1"/>
<dbReference type="EC" id="6.3.5.5" evidence="1"/>
<dbReference type="EMBL" id="FM204884">
    <property type="protein sequence ID" value="CAW99044.1"/>
    <property type="molecule type" value="Genomic_DNA"/>
</dbReference>
<dbReference type="SMR" id="C0MEH1"/>
<dbReference type="KEGG" id="seq:SZO_08480"/>
<dbReference type="PATRIC" id="fig|40041.11.peg.901"/>
<dbReference type="eggNOG" id="COG0458">
    <property type="taxonomic scope" value="Bacteria"/>
</dbReference>
<dbReference type="HOGENOM" id="CLU_000513_1_3_9"/>
<dbReference type="UniPathway" id="UPA00068">
    <property type="reaction ID" value="UER00171"/>
</dbReference>
<dbReference type="UniPathway" id="UPA00070">
    <property type="reaction ID" value="UER00115"/>
</dbReference>
<dbReference type="Proteomes" id="UP000001368">
    <property type="component" value="Chromosome"/>
</dbReference>
<dbReference type="GO" id="GO:0005737">
    <property type="term" value="C:cytoplasm"/>
    <property type="evidence" value="ECO:0007669"/>
    <property type="project" value="TreeGrafter"/>
</dbReference>
<dbReference type="GO" id="GO:0005524">
    <property type="term" value="F:ATP binding"/>
    <property type="evidence" value="ECO:0007669"/>
    <property type="project" value="UniProtKB-UniRule"/>
</dbReference>
<dbReference type="GO" id="GO:0004087">
    <property type="term" value="F:carbamoyl-phosphate synthase (ammonia) activity"/>
    <property type="evidence" value="ECO:0007669"/>
    <property type="project" value="RHEA"/>
</dbReference>
<dbReference type="GO" id="GO:0004088">
    <property type="term" value="F:carbamoyl-phosphate synthase (glutamine-hydrolyzing) activity"/>
    <property type="evidence" value="ECO:0007669"/>
    <property type="project" value="UniProtKB-UniRule"/>
</dbReference>
<dbReference type="GO" id="GO:0046872">
    <property type="term" value="F:metal ion binding"/>
    <property type="evidence" value="ECO:0007669"/>
    <property type="project" value="UniProtKB-KW"/>
</dbReference>
<dbReference type="GO" id="GO:0044205">
    <property type="term" value="P:'de novo' UMP biosynthetic process"/>
    <property type="evidence" value="ECO:0007669"/>
    <property type="project" value="UniProtKB-UniRule"/>
</dbReference>
<dbReference type="GO" id="GO:0006541">
    <property type="term" value="P:glutamine metabolic process"/>
    <property type="evidence" value="ECO:0007669"/>
    <property type="project" value="TreeGrafter"/>
</dbReference>
<dbReference type="GO" id="GO:0006526">
    <property type="term" value="P:L-arginine biosynthetic process"/>
    <property type="evidence" value="ECO:0007669"/>
    <property type="project" value="UniProtKB-UniRule"/>
</dbReference>
<dbReference type="CDD" id="cd01424">
    <property type="entry name" value="MGS_CPS_II"/>
    <property type="match status" value="1"/>
</dbReference>
<dbReference type="FunFam" id="1.10.1030.10:FF:000002">
    <property type="entry name" value="Carbamoyl-phosphate synthase large chain"/>
    <property type="match status" value="1"/>
</dbReference>
<dbReference type="FunFam" id="3.30.1490.20:FF:000001">
    <property type="entry name" value="Carbamoyl-phosphate synthase large chain"/>
    <property type="match status" value="1"/>
</dbReference>
<dbReference type="FunFam" id="3.30.470.20:FF:000001">
    <property type="entry name" value="Carbamoyl-phosphate synthase large chain"/>
    <property type="match status" value="1"/>
</dbReference>
<dbReference type="FunFam" id="3.30.470.20:FF:000026">
    <property type="entry name" value="Carbamoyl-phosphate synthase large chain"/>
    <property type="match status" value="1"/>
</dbReference>
<dbReference type="FunFam" id="3.40.50.20:FF:000001">
    <property type="entry name" value="Carbamoyl-phosphate synthase large chain"/>
    <property type="match status" value="2"/>
</dbReference>
<dbReference type="Gene3D" id="3.40.50.20">
    <property type="match status" value="2"/>
</dbReference>
<dbReference type="Gene3D" id="3.30.1490.20">
    <property type="entry name" value="ATP-grasp fold, A domain"/>
    <property type="match status" value="1"/>
</dbReference>
<dbReference type="Gene3D" id="3.30.470.20">
    <property type="entry name" value="ATP-grasp fold, B domain"/>
    <property type="match status" value="2"/>
</dbReference>
<dbReference type="Gene3D" id="1.10.1030.10">
    <property type="entry name" value="Carbamoyl-phosphate synthetase, large subunit oligomerisation domain"/>
    <property type="match status" value="1"/>
</dbReference>
<dbReference type="Gene3D" id="3.40.50.1380">
    <property type="entry name" value="Methylglyoxal synthase-like domain"/>
    <property type="match status" value="1"/>
</dbReference>
<dbReference type="HAMAP" id="MF_01210_A">
    <property type="entry name" value="CPSase_L_chain_A"/>
    <property type="match status" value="1"/>
</dbReference>
<dbReference type="HAMAP" id="MF_01210_B">
    <property type="entry name" value="CPSase_L_chain_B"/>
    <property type="match status" value="1"/>
</dbReference>
<dbReference type="InterPro" id="IPR011761">
    <property type="entry name" value="ATP-grasp"/>
</dbReference>
<dbReference type="InterPro" id="IPR013815">
    <property type="entry name" value="ATP_grasp_subdomain_1"/>
</dbReference>
<dbReference type="InterPro" id="IPR006275">
    <property type="entry name" value="CarbamoylP_synth_lsu"/>
</dbReference>
<dbReference type="InterPro" id="IPR005480">
    <property type="entry name" value="CarbamoylP_synth_lsu_oligo"/>
</dbReference>
<dbReference type="InterPro" id="IPR036897">
    <property type="entry name" value="CarbamoylP_synth_lsu_oligo_sf"/>
</dbReference>
<dbReference type="InterPro" id="IPR005479">
    <property type="entry name" value="CbamoylP_synth_lsu-like_ATP-bd"/>
</dbReference>
<dbReference type="InterPro" id="IPR005483">
    <property type="entry name" value="CbamoylP_synth_lsu_CPSase_dom"/>
</dbReference>
<dbReference type="InterPro" id="IPR011607">
    <property type="entry name" value="MGS-like_dom"/>
</dbReference>
<dbReference type="InterPro" id="IPR036914">
    <property type="entry name" value="MGS-like_dom_sf"/>
</dbReference>
<dbReference type="InterPro" id="IPR033937">
    <property type="entry name" value="MGS_CPS_CarB"/>
</dbReference>
<dbReference type="InterPro" id="IPR016185">
    <property type="entry name" value="PreATP-grasp_dom_sf"/>
</dbReference>
<dbReference type="NCBIfam" id="TIGR01369">
    <property type="entry name" value="CPSaseII_lrg"/>
    <property type="match status" value="1"/>
</dbReference>
<dbReference type="NCBIfam" id="NF003671">
    <property type="entry name" value="PRK05294.1"/>
    <property type="match status" value="1"/>
</dbReference>
<dbReference type="NCBIfam" id="NF009455">
    <property type="entry name" value="PRK12815.1"/>
    <property type="match status" value="1"/>
</dbReference>
<dbReference type="PANTHER" id="PTHR11405:SF53">
    <property type="entry name" value="CARBAMOYL-PHOSPHATE SYNTHASE [AMMONIA], MITOCHONDRIAL"/>
    <property type="match status" value="1"/>
</dbReference>
<dbReference type="PANTHER" id="PTHR11405">
    <property type="entry name" value="CARBAMOYLTRANSFERASE FAMILY MEMBER"/>
    <property type="match status" value="1"/>
</dbReference>
<dbReference type="Pfam" id="PF02786">
    <property type="entry name" value="CPSase_L_D2"/>
    <property type="match status" value="2"/>
</dbReference>
<dbReference type="Pfam" id="PF02787">
    <property type="entry name" value="CPSase_L_D3"/>
    <property type="match status" value="1"/>
</dbReference>
<dbReference type="Pfam" id="PF02142">
    <property type="entry name" value="MGS"/>
    <property type="match status" value="1"/>
</dbReference>
<dbReference type="PRINTS" id="PR00098">
    <property type="entry name" value="CPSASE"/>
</dbReference>
<dbReference type="SMART" id="SM01096">
    <property type="entry name" value="CPSase_L_D3"/>
    <property type="match status" value="1"/>
</dbReference>
<dbReference type="SMART" id="SM01209">
    <property type="entry name" value="GARS_A"/>
    <property type="match status" value="1"/>
</dbReference>
<dbReference type="SMART" id="SM00851">
    <property type="entry name" value="MGS"/>
    <property type="match status" value="1"/>
</dbReference>
<dbReference type="SUPFAM" id="SSF48108">
    <property type="entry name" value="Carbamoyl phosphate synthetase, large subunit connection domain"/>
    <property type="match status" value="1"/>
</dbReference>
<dbReference type="SUPFAM" id="SSF56059">
    <property type="entry name" value="Glutathione synthetase ATP-binding domain-like"/>
    <property type="match status" value="2"/>
</dbReference>
<dbReference type="SUPFAM" id="SSF52335">
    <property type="entry name" value="Methylglyoxal synthase-like"/>
    <property type="match status" value="1"/>
</dbReference>
<dbReference type="SUPFAM" id="SSF52440">
    <property type="entry name" value="PreATP-grasp domain"/>
    <property type="match status" value="2"/>
</dbReference>
<dbReference type="PROSITE" id="PS50975">
    <property type="entry name" value="ATP_GRASP"/>
    <property type="match status" value="2"/>
</dbReference>
<dbReference type="PROSITE" id="PS00866">
    <property type="entry name" value="CPSASE_1"/>
    <property type="match status" value="2"/>
</dbReference>
<dbReference type="PROSITE" id="PS00867">
    <property type="entry name" value="CPSASE_2"/>
    <property type="match status" value="2"/>
</dbReference>
<dbReference type="PROSITE" id="PS51855">
    <property type="entry name" value="MGS"/>
    <property type="match status" value="1"/>
</dbReference>
<feature type="chain" id="PRO_1000213879" description="Carbamoyl phosphate synthase large chain">
    <location>
        <begin position="1"/>
        <end position="1058"/>
    </location>
</feature>
<feature type="domain" description="ATP-grasp 1" evidence="1">
    <location>
        <begin position="133"/>
        <end position="327"/>
    </location>
</feature>
<feature type="domain" description="ATP-grasp 2" evidence="1">
    <location>
        <begin position="671"/>
        <end position="861"/>
    </location>
</feature>
<feature type="domain" description="MGS-like" evidence="1">
    <location>
        <begin position="930"/>
        <end position="1058"/>
    </location>
</feature>
<feature type="region of interest" description="Carboxyphosphate synthetic domain" evidence="1">
    <location>
        <begin position="1"/>
        <end position="401"/>
    </location>
</feature>
<feature type="region of interest" description="Oligomerization domain" evidence="1">
    <location>
        <begin position="402"/>
        <end position="546"/>
    </location>
</feature>
<feature type="region of interest" description="Carbamoyl phosphate synthetic domain" evidence="1">
    <location>
        <begin position="547"/>
        <end position="929"/>
    </location>
</feature>
<feature type="region of interest" description="Allosteric domain" evidence="1">
    <location>
        <begin position="930"/>
        <end position="1058"/>
    </location>
</feature>
<feature type="binding site" evidence="1">
    <location>
        <position position="129"/>
    </location>
    <ligand>
        <name>ATP</name>
        <dbReference type="ChEBI" id="CHEBI:30616"/>
        <label>1</label>
    </ligand>
</feature>
<feature type="binding site" evidence="1">
    <location>
        <position position="169"/>
    </location>
    <ligand>
        <name>ATP</name>
        <dbReference type="ChEBI" id="CHEBI:30616"/>
        <label>1</label>
    </ligand>
</feature>
<feature type="binding site" evidence="1">
    <location>
        <position position="175"/>
    </location>
    <ligand>
        <name>ATP</name>
        <dbReference type="ChEBI" id="CHEBI:30616"/>
        <label>1</label>
    </ligand>
</feature>
<feature type="binding site" evidence="1">
    <location>
        <position position="176"/>
    </location>
    <ligand>
        <name>ATP</name>
        <dbReference type="ChEBI" id="CHEBI:30616"/>
        <label>1</label>
    </ligand>
</feature>
<feature type="binding site" evidence="1">
    <location>
        <position position="208"/>
    </location>
    <ligand>
        <name>ATP</name>
        <dbReference type="ChEBI" id="CHEBI:30616"/>
        <label>1</label>
    </ligand>
</feature>
<feature type="binding site" evidence="1">
    <location>
        <position position="210"/>
    </location>
    <ligand>
        <name>ATP</name>
        <dbReference type="ChEBI" id="CHEBI:30616"/>
        <label>1</label>
    </ligand>
</feature>
<feature type="binding site" evidence="1">
    <location>
        <position position="215"/>
    </location>
    <ligand>
        <name>ATP</name>
        <dbReference type="ChEBI" id="CHEBI:30616"/>
        <label>1</label>
    </ligand>
</feature>
<feature type="binding site" evidence="1">
    <location>
        <position position="241"/>
    </location>
    <ligand>
        <name>ATP</name>
        <dbReference type="ChEBI" id="CHEBI:30616"/>
        <label>1</label>
    </ligand>
</feature>
<feature type="binding site" evidence="1">
    <location>
        <position position="242"/>
    </location>
    <ligand>
        <name>ATP</name>
        <dbReference type="ChEBI" id="CHEBI:30616"/>
        <label>1</label>
    </ligand>
</feature>
<feature type="binding site" evidence="1">
    <location>
        <position position="243"/>
    </location>
    <ligand>
        <name>ATP</name>
        <dbReference type="ChEBI" id="CHEBI:30616"/>
        <label>1</label>
    </ligand>
</feature>
<feature type="binding site" evidence="1">
    <location>
        <position position="284"/>
    </location>
    <ligand>
        <name>ATP</name>
        <dbReference type="ChEBI" id="CHEBI:30616"/>
        <label>1</label>
    </ligand>
</feature>
<feature type="binding site" evidence="1">
    <location>
        <position position="284"/>
    </location>
    <ligand>
        <name>Mg(2+)</name>
        <dbReference type="ChEBI" id="CHEBI:18420"/>
        <label>1</label>
    </ligand>
</feature>
<feature type="binding site" evidence="1">
    <location>
        <position position="284"/>
    </location>
    <ligand>
        <name>Mn(2+)</name>
        <dbReference type="ChEBI" id="CHEBI:29035"/>
        <label>1</label>
    </ligand>
</feature>
<feature type="binding site" evidence="1">
    <location>
        <position position="298"/>
    </location>
    <ligand>
        <name>ATP</name>
        <dbReference type="ChEBI" id="CHEBI:30616"/>
        <label>1</label>
    </ligand>
</feature>
<feature type="binding site" evidence="1">
    <location>
        <position position="298"/>
    </location>
    <ligand>
        <name>Mg(2+)</name>
        <dbReference type="ChEBI" id="CHEBI:18420"/>
        <label>1</label>
    </ligand>
</feature>
<feature type="binding site" evidence="1">
    <location>
        <position position="298"/>
    </location>
    <ligand>
        <name>Mg(2+)</name>
        <dbReference type="ChEBI" id="CHEBI:18420"/>
        <label>2</label>
    </ligand>
</feature>
<feature type="binding site" evidence="1">
    <location>
        <position position="298"/>
    </location>
    <ligand>
        <name>Mn(2+)</name>
        <dbReference type="ChEBI" id="CHEBI:29035"/>
        <label>1</label>
    </ligand>
</feature>
<feature type="binding site" evidence="1">
    <location>
        <position position="298"/>
    </location>
    <ligand>
        <name>Mn(2+)</name>
        <dbReference type="ChEBI" id="CHEBI:29035"/>
        <label>2</label>
    </ligand>
</feature>
<feature type="binding site" evidence="1">
    <location>
        <position position="300"/>
    </location>
    <ligand>
        <name>Mg(2+)</name>
        <dbReference type="ChEBI" id="CHEBI:18420"/>
        <label>2</label>
    </ligand>
</feature>
<feature type="binding site" evidence="1">
    <location>
        <position position="300"/>
    </location>
    <ligand>
        <name>Mn(2+)</name>
        <dbReference type="ChEBI" id="CHEBI:29035"/>
        <label>2</label>
    </ligand>
</feature>
<feature type="binding site" evidence="1">
    <location>
        <position position="707"/>
    </location>
    <ligand>
        <name>ATP</name>
        <dbReference type="ChEBI" id="CHEBI:30616"/>
        <label>2</label>
    </ligand>
</feature>
<feature type="binding site" evidence="1">
    <location>
        <position position="746"/>
    </location>
    <ligand>
        <name>ATP</name>
        <dbReference type="ChEBI" id="CHEBI:30616"/>
        <label>2</label>
    </ligand>
</feature>
<feature type="binding site" evidence="1">
    <location>
        <position position="748"/>
    </location>
    <ligand>
        <name>ATP</name>
        <dbReference type="ChEBI" id="CHEBI:30616"/>
        <label>2</label>
    </ligand>
</feature>
<feature type="binding site" evidence="1">
    <location>
        <position position="752"/>
    </location>
    <ligand>
        <name>ATP</name>
        <dbReference type="ChEBI" id="CHEBI:30616"/>
        <label>2</label>
    </ligand>
</feature>
<feature type="binding site" evidence="1">
    <location>
        <position position="777"/>
    </location>
    <ligand>
        <name>ATP</name>
        <dbReference type="ChEBI" id="CHEBI:30616"/>
        <label>2</label>
    </ligand>
</feature>
<feature type="binding site" evidence="1">
    <location>
        <position position="778"/>
    </location>
    <ligand>
        <name>ATP</name>
        <dbReference type="ChEBI" id="CHEBI:30616"/>
        <label>2</label>
    </ligand>
</feature>
<feature type="binding site" evidence="1">
    <location>
        <position position="779"/>
    </location>
    <ligand>
        <name>ATP</name>
        <dbReference type="ChEBI" id="CHEBI:30616"/>
        <label>2</label>
    </ligand>
</feature>
<feature type="binding site" evidence="1">
    <location>
        <position position="780"/>
    </location>
    <ligand>
        <name>ATP</name>
        <dbReference type="ChEBI" id="CHEBI:30616"/>
        <label>2</label>
    </ligand>
</feature>
<feature type="binding site" evidence="1">
    <location>
        <position position="820"/>
    </location>
    <ligand>
        <name>ATP</name>
        <dbReference type="ChEBI" id="CHEBI:30616"/>
        <label>2</label>
    </ligand>
</feature>
<feature type="binding site" evidence="1">
    <location>
        <position position="820"/>
    </location>
    <ligand>
        <name>Mg(2+)</name>
        <dbReference type="ChEBI" id="CHEBI:18420"/>
        <label>3</label>
    </ligand>
</feature>
<feature type="binding site" evidence="1">
    <location>
        <position position="820"/>
    </location>
    <ligand>
        <name>Mn(2+)</name>
        <dbReference type="ChEBI" id="CHEBI:29035"/>
        <label>3</label>
    </ligand>
</feature>
<feature type="binding site" evidence="1">
    <location>
        <position position="832"/>
    </location>
    <ligand>
        <name>ATP</name>
        <dbReference type="ChEBI" id="CHEBI:30616"/>
        <label>2</label>
    </ligand>
</feature>
<feature type="binding site" evidence="1">
    <location>
        <position position="832"/>
    </location>
    <ligand>
        <name>Mg(2+)</name>
        <dbReference type="ChEBI" id="CHEBI:18420"/>
        <label>3</label>
    </ligand>
</feature>
<feature type="binding site" evidence="1">
    <location>
        <position position="832"/>
    </location>
    <ligand>
        <name>Mg(2+)</name>
        <dbReference type="ChEBI" id="CHEBI:18420"/>
        <label>4</label>
    </ligand>
</feature>
<feature type="binding site" evidence="1">
    <location>
        <position position="832"/>
    </location>
    <ligand>
        <name>Mn(2+)</name>
        <dbReference type="ChEBI" id="CHEBI:29035"/>
        <label>3</label>
    </ligand>
</feature>
<feature type="binding site" evidence="1">
    <location>
        <position position="832"/>
    </location>
    <ligand>
        <name>Mn(2+)</name>
        <dbReference type="ChEBI" id="CHEBI:29035"/>
        <label>4</label>
    </ligand>
</feature>
<feature type="binding site" evidence="1">
    <location>
        <position position="834"/>
    </location>
    <ligand>
        <name>Mg(2+)</name>
        <dbReference type="ChEBI" id="CHEBI:18420"/>
        <label>4</label>
    </ligand>
</feature>
<feature type="binding site" evidence="1">
    <location>
        <position position="834"/>
    </location>
    <ligand>
        <name>Mn(2+)</name>
        <dbReference type="ChEBI" id="CHEBI:29035"/>
        <label>4</label>
    </ligand>
</feature>
<proteinExistence type="inferred from homology"/>
<comment type="function">
    <text evidence="1">Large subunit of the glutamine-dependent carbamoyl phosphate synthetase (CPSase). CPSase catalyzes the formation of carbamoyl phosphate from the ammonia moiety of glutamine, carbonate, and phosphate donated by ATP, constituting the first step of 2 biosynthetic pathways, one leading to arginine and/or urea and the other to pyrimidine nucleotides. The large subunit (synthetase) binds the substrates ammonia (free or transferred from glutamine from the small subunit), hydrogencarbonate and ATP and carries out an ATP-coupled ligase reaction, activating hydrogencarbonate by forming carboxy phosphate which reacts with ammonia to form carbamoyl phosphate.</text>
</comment>
<comment type="catalytic activity">
    <reaction evidence="1">
        <text>hydrogencarbonate + L-glutamine + 2 ATP + H2O = carbamoyl phosphate + L-glutamate + 2 ADP + phosphate + 2 H(+)</text>
        <dbReference type="Rhea" id="RHEA:18633"/>
        <dbReference type="ChEBI" id="CHEBI:15377"/>
        <dbReference type="ChEBI" id="CHEBI:15378"/>
        <dbReference type="ChEBI" id="CHEBI:17544"/>
        <dbReference type="ChEBI" id="CHEBI:29985"/>
        <dbReference type="ChEBI" id="CHEBI:30616"/>
        <dbReference type="ChEBI" id="CHEBI:43474"/>
        <dbReference type="ChEBI" id="CHEBI:58228"/>
        <dbReference type="ChEBI" id="CHEBI:58359"/>
        <dbReference type="ChEBI" id="CHEBI:456216"/>
        <dbReference type="EC" id="6.3.5.5"/>
    </reaction>
</comment>
<comment type="catalytic activity">
    <molecule>Carbamoyl phosphate synthase large chain</molecule>
    <reaction evidence="1">
        <text>hydrogencarbonate + NH4(+) + 2 ATP = carbamoyl phosphate + 2 ADP + phosphate + 2 H(+)</text>
        <dbReference type="Rhea" id="RHEA:18029"/>
        <dbReference type="ChEBI" id="CHEBI:15378"/>
        <dbReference type="ChEBI" id="CHEBI:17544"/>
        <dbReference type="ChEBI" id="CHEBI:28938"/>
        <dbReference type="ChEBI" id="CHEBI:30616"/>
        <dbReference type="ChEBI" id="CHEBI:43474"/>
        <dbReference type="ChEBI" id="CHEBI:58228"/>
        <dbReference type="ChEBI" id="CHEBI:456216"/>
        <dbReference type="EC" id="6.3.4.16"/>
    </reaction>
</comment>
<comment type="cofactor">
    <cofactor evidence="1">
        <name>Mg(2+)</name>
        <dbReference type="ChEBI" id="CHEBI:18420"/>
    </cofactor>
    <cofactor evidence="1">
        <name>Mn(2+)</name>
        <dbReference type="ChEBI" id="CHEBI:29035"/>
    </cofactor>
    <text evidence="1">Binds 4 Mg(2+) or Mn(2+) ions per subunit.</text>
</comment>
<comment type="pathway">
    <text evidence="1">Amino-acid biosynthesis; L-arginine biosynthesis; carbamoyl phosphate from bicarbonate: step 1/1.</text>
</comment>
<comment type="pathway">
    <text evidence="1">Pyrimidine metabolism; UMP biosynthesis via de novo pathway; (S)-dihydroorotate from bicarbonate: step 1/3.</text>
</comment>
<comment type="subunit">
    <text evidence="1">Composed of two chains; the small (or glutamine) chain promotes the hydrolysis of glutamine to ammonia, which is used by the large (or ammonia) chain to synthesize carbamoyl phosphate. Tetramer of heterodimers (alpha,beta)4.</text>
</comment>
<comment type="domain">
    <text evidence="1">The large subunit is composed of 2 ATP-grasp domains that are involved in binding the 2 ATP molecules needed for carbamoyl phosphate synthesis. The N-terminal ATP-grasp domain (referred to as the carboxyphosphate synthetic component) catalyzes the ATP-dependent phosphorylation of hydrogencarbonate to carboxyphosphate and the subsequent nucleophilic attack by ammonia to form a carbamate intermediate. The C-terminal ATP-grasp domain (referred to as the carbamoyl phosphate synthetic component) then catalyzes the phosphorylation of carbamate with the second ATP to form the end product carbamoyl phosphate. The reactive and unstable enzyme intermediates are sequentially channeled from one active site to the next through the interior of the protein over a distance of at least 96 A.</text>
</comment>
<comment type="similarity">
    <text evidence="1">Belongs to the CarB family.</text>
</comment>
<evidence type="ECO:0000255" key="1">
    <source>
        <dbReference type="HAMAP-Rule" id="MF_01210"/>
    </source>
</evidence>
<keyword id="KW-0028">Amino-acid biosynthesis</keyword>
<keyword id="KW-0055">Arginine biosynthesis</keyword>
<keyword id="KW-0067">ATP-binding</keyword>
<keyword id="KW-0436">Ligase</keyword>
<keyword id="KW-0460">Magnesium</keyword>
<keyword id="KW-0464">Manganese</keyword>
<keyword id="KW-0479">Metal-binding</keyword>
<keyword id="KW-0547">Nucleotide-binding</keyword>
<keyword id="KW-0665">Pyrimidine biosynthesis</keyword>
<keyword id="KW-0677">Repeat</keyword>
<protein>
    <recommendedName>
        <fullName evidence="1">Carbamoyl phosphate synthase large chain</fullName>
        <ecNumber evidence="1">6.3.4.16</ecNumber>
        <ecNumber evidence="1">6.3.5.5</ecNumber>
    </recommendedName>
    <alternativeName>
        <fullName evidence="1">Carbamoyl phosphate synthetase ammonia chain</fullName>
    </alternativeName>
</protein>
<organism>
    <name type="scientific">Streptococcus equi subsp. zooepidemicus (strain H70)</name>
    <dbReference type="NCBI Taxonomy" id="553483"/>
    <lineage>
        <taxon>Bacteria</taxon>
        <taxon>Bacillati</taxon>
        <taxon>Bacillota</taxon>
        <taxon>Bacilli</taxon>
        <taxon>Lactobacillales</taxon>
        <taxon>Streptococcaceae</taxon>
        <taxon>Streptococcus</taxon>
    </lineage>
</organism>
<gene>
    <name evidence="1" type="primary">carB</name>
    <name type="ordered locus">SZO_08480</name>
</gene>
<reference key="1">
    <citation type="journal article" date="2009" name="PLoS Pathog.">
        <title>Genomic evidence for the evolution of Streptococcus equi: host restriction, increased virulence, and genetic exchange with human pathogens.</title>
        <authorList>
            <person name="Holden M.T.G."/>
            <person name="Heather Z."/>
            <person name="Paillot R."/>
            <person name="Steward K.F."/>
            <person name="Webb K."/>
            <person name="Ainslie F."/>
            <person name="Jourdan T."/>
            <person name="Bason N.C."/>
            <person name="Holroyd N.E."/>
            <person name="Mungall K."/>
            <person name="Quail M.A."/>
            <person name="Sanders M."/>
            <person name="Simmonds M."/>
            <person name="Willey D."/>
            <person name="Brooks K."/>
            <person name="Aanensen D.M."/>
            <person name="Spratt B.G."/>
            <person name="Jolley K.A."/>
            <person name="Maiden M.C.J."/>
            <person name="Kehoe M."/>
            <person name="Chanter N."/>
            <person name="Bentley S.D."/>
            <person name="Robinson C."/>
            <person name="Maskell D.J."/>
            <person name="Parkhill J."/>
            <person name="Waller A.S."/>
        </authorList>
    </citation>
    <scope>NUCLEOTIDE SEQUENCE [LARGE SCALE GENOMIC DNA]</scope>
    <source>
        <strain>H70</strain>
    </source>
</reference>